<proteinExistence type="inferred from homology"/>
<gene>
    <name evidence="1" type="primary">deoB</name>
    <name type="ordered locus">Sfri_1004</name>
</gene>
<protein>
    <recommendedName>
        <fullName evidence="1">Phosphopentomutase</fullName>
        <ecNumber evidence="1">5.4.2.7</ecNumber>
    </recommendedName>
    <alternativeName>
        <fullName evidence="1">Phosphodeoxyribomutase</fullName>
    </alternativeName>
</protein>
<evidence type="ECO:0000255" key="1">
    <source>
        <dbReference type="HAMAP-Rule" id="MF_00740"/>
    </source>
</evidence>
<name>DEOB_SHEFN</name>
<comment type="function">
    <text evidence="1">Isomerase that catalyzes the conversion of deoxy-ribose 1-phosphate (dRib-1-P) and ribose 1-phosphate (Rib-1-P) to deoxy-ribose 5-phosphate (dRib-5-P) and ribose 5-phosphate (Rib-5-P), respectively.</text>
</comment>
<comment type="catalytic activity">
    <reaction evidence="1">
        <text>2-deoxy-alpha-D-ribose 1-phosphate = 2-deoxy-D-ribose 5-phosphate</text>
        <dbReference type="Rhea" id="RHEA:27658"/>
        <dbReference type="ChEBI" id="CHEBI:57259"/>
        <dbReference type="ChEBI" id="CHEBI:62877"/>
        <dbReference type="EC" id="5.4.2.7"/>
    </reaction>
</comment>
<comment type="catalytic activity">
    <reaction evidence="1">
        <text>alpha-D-ribose 1-phosphate = D-ribose 5-phosphate</text>
        <dbReference type="Rhea" id="RHEA:18793"/>
        <dbReference type="ChEBI" id="CHEBI:57720"/>
        <dbReference type="ChEBI" id="CHEBI:78346"/>
        <dbReference type="EC" id="5.4.2.7"/>
    </reaction>
</comment>
<comment type="cofactor">
    <cofactor evidence="1">
        <name>Mn(2+)</name>
        <dbReference type="ChEBI" id="CHEBI:29035"/>
    </cofactor>
    <text evidence="1">Binds 2 manganese ions.</text>
</comment>
<comment type="pathway">
    <text evidence="1">Carbohydrate degradation; 2-deoxy-D-ribose 1-phosphate degradation; D-glyceraldehyde 3-phosphate and acetaldehyde from 2-deoxy-alpha-D-ribose 1-phosphate: step 1/2.</text>
</comment>
<comment type="subcellular location">
    <subcellularLocation>
        <location evidence="1">Cytoplasm</location>
    </subcellularLocation>
</comment>
<comment type="similarity">
    <text evidence="1">Belongs to the phosphopentomutase family.</text>
</comment>
<reference key="1">
    <citation type="submission" date="2006-08" db="EMBL/GenBank/DDBJ databases">
        <title>Complete sequence of Shewanella frigidimarina NCIMB 400.</title>
        <authorList>
            <consortium name="US DOE Joint Genome Institute"/>
            <person name="Copeland A."/>
            <person name="Lucas S."/>
            <person name="Lapidus A."/>
            <person name="Barry K."/>
            <person name="Detter J.C."/>
            <person name="Glavina del Rio T."/>
            <person name="Hammon N."/>
            <person name="Israni S."/>
            <person name="Dalin E."/>
            <person name="Tice H."/>
            <person name="Pitluck S."/>
            <person name="Fredrickson J.K."/>
            <person name="Kolker E."/>
            <person name="McCuel L.A."/>
            <person name="DiChristina T."/>
            <person name="Nealson K.H."/>
            <person name="Newman D."/>
            <person name="Tiedje J.M."/>
            <person name="Zhou J."/>
            <person name="Romine M.F."/>
            <person name="Culley D.E."/>
            <person name="Serres M."/>
            <person name="Chertkov O."/>
            <person name="Brettin T."/>
            <person name="Bruce D."/>
            <person name="Han C."/>
            <person name="Tapia R."/>
            <person name="Gilna P."/>
            <person name="Schmutz J."/>
            <person name="Larimer F."/>
            <person name="Land M."/>
            <person name="Hauser L."/>
            <person name="Kyrpides N."/>
            <person name="Mikhailova N."/>
            <person name="Richardson P."/>
        </authorList>
    </citation>
    <scope>NUCLEOTIDE SEQUENCE [LARGE SCALE GENOMIC DNA]</scope>
    <source>
        <strain>NCIMB 400</strain>
    </source>
</reference>
<accession>Q086F8</accession>
<dbReference type="EC" id="5.4.2.7" evidence="1"/>
<dbReference type="EMBL" id="CP000447">
    <property type="protein sequence ID" value="ABI70857.1"/>
    <property type="molecule type" value="Genomic_DNA"/>
</dbReference>
<dbReference type="RefSeq" id="WP_011636478.1">
    <property type="nucleotide sequence ID" value="NC_008345.1"/>
</dbReference>
<dbReference type="SMR" id="Q086F8"/>
<dbReference type="STRING" id="318167.Sfri_1004"/>
<dbReference type="KEGG" id="sfr:Sfri_1004"/>
<dbReference type="eggNOG" id="COG1015">
    <property type="taxonomic scope" value="Bacteria"/>
</dbReference>
<dbReference type="HOGENOM" id="CLU_053861_0_0_6"/>
<dbReference type="OrthoDB" id="9769930at2"/>
<dbReference type="UniPathway" id="UPA00002">
    <property type="reaction ID" value="UER00467"/>
</dbReference>
<dbReference type="Proteomes" id="UP000000684">
    <property type="component" value="Chromosome"/>
</dbReference>
<dbReference type="GO" id="GO:0005829">
    <property type="term" value="C:cytosol"/>
    <property type="evidence" value="ECO:0007669"/>
    <property type="project" value="TreeGrafter"/>
</dbReference>
<dbReference type="GO" id="GO:0000287">
    <property type="term" value="F:magnesium ion binding"/>
    <property type="evidence" value="ECO:0007669"/>
    <property type="project" value="InterPro"/>
</dbReference>
<dbReference type="GO" id="GO:0030145">
    <property type="term" value="F:manganese ion binding"/>
    <property type="evidence" value="ECO:0007669"/>
    <property type="project" value="UniProtKB-UniRule"/>
</dbReference>
<dbReference type="GO" id="GO:0008973">
    <property type="term" value="F:phosphopentomutase activity"/>
    <property type="evidence" value="ECO:0007669"/>
    <property type="project" value="UniProtKB-UniRule"/>
</dbReference>
<dbReference type="GO" id="GO:0006018">
    <property type="term" value="P:2-deoxyribose 1-phosphate catabolic process"/>
    <property type="evidence" value="ECO:0007669"/>
    <property type="project" value="UniProtKB-UniRule"/>
</dbReference>
<dbReference type="GO" id="GO:0006015">
    <property type="term" value="P:5-phosphoribose 1-diphosphate biosynthetic process"/>
    <property type="evidence" value="ECO:0007669"/>
    <property type="project" value="UniProtKB-UniPathway"/>
</dbReference>
<dbReference type="GO" id="GO:0043094">
    <property type="term" value="P:metabolic compound salvage"/>
    <property type="evidence" value="ECO:0007669"/>
    <property type="project" value="InterPro"/>
</dbReference>
<dbReference type="GO" id="GO:0009117">
    <property type="term" value="P:nucleotide metabolic process"/>
    <property type="evidence" value="ECO:0007669"/>
    <property type="project" value="InterPro"/>
</dbReference>
<dbReference type="CDD" id="cd16009">
    <property type="entry name" value="PPM"/>
    <property type="match status" value="1"/>
</dbReference>
<dbReference type="FunFam" id="3.30.70.1250:FF:000001">
    <property type="entry name" value="Phosphopentomutase"/>
    <property type="match status" value="1"/>
</dbReference>
<dbReference type="Gene3D" id="3.40.720.10">
    <property type="entry name" value="Alkaline Phosphatase, subunit A"/>
    <property type="match status" value="1"/>
</dbReference>
<dbReference type="Gene3D" id="3.30.70.1250">
    <property type="entry name" value="Phosphopentomutase"/>
    <property type="match status" value="1"/>
</dbReference>
<dbReference type="HAMAP" id="MF_00740">
    <property type="entry name" value="Phosphopentomut"/>
    <property type="match status" value="1"/>
</dbReference>
<dbReference type="InterPro" id="IPR017850">
    <property type="entry name" value="Alkaline_phosphatase_core_sf"/>
</dbReference>
<dbReference type="InterPro" id="IPR010045">
    <property type="entry name" value="DeoB"/>
</dbReference>
<dbReference type="InterPro" id="IPR006124">
    <property type="entry name" value="Metalloenzyme"/>
</dbReference>
<dbReference type="InterPro" id="IPR024052">
    <property type="entry name" value="Phosphopentomutase_DeoB_cap_sf"/>
</dbReference>
<dbReference type="NCBIfam" id="TIGR01696">
    <property type="entry name" value="deoB"/>
    <property type="match status" value="1"/>
</dbReference>
<dbReference type="NCBIfam" id="NF003766">
    <property type="entry name" value="PRK05362.1"/>
    <property type="match status" value="1"/>
</dbReference>
<dbReference type="PANTHER" id="PTHR21110">
    <property type="entry name" value="PHOSPHOPENTOMUTASE"/>
    <property type="match status" value="1"/>
</dbReference>
<dbReference type="PANTHER" id="PTHR21110:SF0">
    <property type="entry name" value="PHOSPHOPENTOMUTASE"/>
    <property type="match status" value="1"/>
</dbReference>
<dbReference type="Pfam" id="PF01676">
    <property type="entry name" value="Metalloenzyme"/>
    <property type="match status" value="1"/>
</dbReference>
<dbReference type="PIRSF" id="PIRSF001491">
    <property type="entry name" value="Ppentomutase"/>
    <property type="match status" value="1"/>
</dbReference>
<dbReference type="SUPFAM" id="SSF53649">
    <property type="entry name" value="Alkaline phosphatase-like"/>
    <property type="match status" value="1"/>
</dbReference>
<dbReference type="SUPFAM" id="SSF143856">
    <property type="entry name" value="DeoB insert domain-like"/>
    <property type="match status" value="1"/>
</dbReference>
<keyword id="KW-0963">Cytoplasm</keyword>
<keyword id="KW-0413">Isomerase</keyword>
<keyword id="KW-0464">Manganese</keyword>
<keyword id="KW-0479">Metal-binding</keyword>
<keyword id="KW-1185">Reference proteome</keyword>
<sequence length="405" mass="43974">MKRTFILMLDSFGVGAATDADKFGDVGSDTFGHIAQACADGKADIGRQGPLKLPNLARFGLGHAGFESTGKFAAGFADNVEVIGAYGHADELSSGKDTPSGHWEMAGVPVLYEWGYFSDLTNSFPKELTDKILERAGLDGFLGNCHASGTQILEELGEEHMKTGKPIFYTSADSVFQIACHEESFGVENLYNLCKIAREELEPYNIGRVIARPFVGTGPADFARTGNRHDYAVLPPAPTVLDKLKDAGGEVVSIGKISDIYAHSGITQQFKATGLEELFDETLAQIKRAGDNTIVFTNFVDFDSHYGHRRDTAGYAKALEYFDSRLPELLAILQPEDLVIFTADHGCDPTWVGTEHTRERVPVLAYGAGLSAGSLGRRKSFADIGQSIASYFKLEPMNYGESFIN</sequence>
<organism>
    <name type="scientific">Shewanella frigidimarina (strain NCIMB 400)</name>
    <dbReference type="NCBI Taxonomy" id="318167"/>
    <lineage>
        <taxon>Bacteria</taxon>
        <taxon>Pseudomonadati</taxon>
        <taxon>Pseudomonadota</taxon>
        <taxon>Gammaproteobacteria</taxon>
        <taxon>Alteromonadales</taxon>
        <taxon>Shewanellaceae</taxon>
        <taxon>Shewanella</taxon>
    </lineage>
</organism>
<feature type="chain" id="PRO_1000046397" description="Phosphopentomutase">
    <location>
        <begin position="1"/>
        <end position="405"/>
    </location>
</feature>
<feature type="binding site" evidence="1">
    <location>
        <position position="10"/>
    </location>
    <ligand>
        <name>Mn(2+)</name>
        <dbReference type="ChEBI" id="CHEBI:29035"/>
        <label>1</label>
    </ligand>
</feature>
<feature type="binding site" evidence="1">
    <location>
        <position position="303"/>
    </location>
    <ligand>
        <name>Mn(2+)</name>
        <dbReference type="ChEBI" id="CHEBI:29035"/>
        <label>2</label>
    </ligand>
</feature>
<feature type="binding site" evidence="1">
    <location>
        <position position="308"/>
    </location>
    <ligand>
        <name>Mn(2+)</name>
        <dbReference type="ChEBI" id="CHEBI:29035"/>
        <label>2</label>
    </ligand>
</feature>
<feature type="binding site" evidence="1">
    <location>
        <position position="344"/>
    </location>
    <ligand>
        <name>Mn(2+)</name>
        <dbReference type="ChEBI" id="CHEBI:29035"/>
        <label>1</label>
    </ligand>
</feature>
<feature type="binding site" evidence="1">
    <location>
        <position position="345"/>
    </location>
    <ligand>
        <name>Mn(2+)</name>
        <dbReference type="ChEBI" id="CHEBI:29035"/>
        <label>1</label>
    </ligand>
</feature>
<feature type="binding site" evidence="1">
    <location>
        <position position="356"/>
    </location>
    <ligand>
        <name>Mn(2+)</name>
        <dbReference type="ChEBI" id="CHEBI:29035"/>
        <label>2</label>
    </ligand>
</feature>